<sequence length="198" mass="21531">MSNRGQLSIEMVILVLAVLVSGSYVALDLSKGAFETTAVNDVQESSYCGFTPDFGATSIDKALVKLTTGIININPNAAVTNNEFNATYTNTTDNTVVTYSLDNVHPNLIKNYADGTIVKVPLNETWKNFTASNIILRMKSDYVCTINGENVSMESNCFEITAPLGSDSFDFQMSAGTGAGQYYLRLVDQEVTIEFSLE</sequence>
<gene>
    <name evidence="6" type="ordered locus">MMP0709</name>
</gene>
<accession>Q6LZC0</accession>
<evidence type="ECO:0000250" key="1">
    <source>
        <dbReference type="UniProtKB" id="Q6LWM4"/>
    </source>
</evidence>
<evidence type="ECO:0000250" key="2">
    <source>
        <dbReference type="UniProtKB" id="Q6M0N7"/>
    </source>
</evidence>
<evidence type="ECO:0000269" key="3">
    <source>
    </source>
</evidence>
<evidence type="ECO:0000305" key="4"/>
<evidence type="ECO:0000305" key="5">
    <source>
    </source>
</evidence>
<evidence type="ECO:0000312" key="6">
    <source>
        <dbReference type="EMBL" id="CAF30265.1"/>
    </source>
</evidence>
<comment type="subcellular location">
    <subcellularLocation>
        <location evidence="1">Secreted</location>
    </subcellularLocation>
    <subcellularLocation>
        <location evidence="1">Cell surface</location>
    </subcellularLocation>
    <subcellularLocation>
        <location evidence="1">Fimbrium</location>
    </subcellularLocation>
</comment>
<comment type="induction">
    <text evidence="3">Expressed under standard laboratory conditions at 35 degrees Celsius.</text>
</comment>
<comment type="domain">
    <text evidence="2">Contains an amino terminal motif QXSXEXXXL, which is part of a class III signal sequence.</text>
</comment>
<comment type="PTM">
    <text evidence="5">The N-terminus is probably cleaved by the prepilin peptidase EppA, which recognizes the class III signal sequence.</text>
</comment>
<comment type="disruption phenotype">
    <text evidence="3">Disruption of the gene does not change the piliation compared with the parent cells.</text>
</comment>
<keyword id="KW-0281">Fimbrium</keyword>
<keyword id="KW-1185">Reference proteome</keyword>
<keyword id="KW-0964">Secreted</keyword>
<dbReference type="EMBL" id="BX950229">
    <property type="protein sequence ID" value="CAF30265.1"/>
    <property type="molecule type" value="Genomic_DNA"/>
</dbReference>
<dbReference type="RefSeq" id="WP_011170653.1">
    <property type="nucleotide sequence ID" value="NC_005791.1"/>
</dbReference>
<dbReference type="STRING" id="267377.MMP0709"/>
<dbReference type="EnsemblBacteria" id="CAF30265">
    <property type="protein sequence ID" value="CAF30265"/>
    <property type="gene ID" value="MMP0709"/>
</dbReference>
<dbReference type="GeneID" id="10981967"/>
<dbReference type="KEGG" id="mmp:MMP0709"/>
<dbReference type="PATRIC" id="fig|267377.15.peg.726"/>
<dbReference type="eggNOG" id="arCOG06626">
    <property type="taxonomic scope" value="Archaea"/>
</dbReference>
<dbReference type="HOGENOM" id="CLU_1375528_0_0_2"/>
<dbReference type="OrthoDB" id="60576at2157"/>
<dbReference type="Proteomes" id="UP000000590">
    <property type="component" value="Chromosome"/>
</dbReference>
<dbReference type="GO" id="GO:0009986">
    <property type="term" value="C:cell surface"/>
    <property type="evidence" value="ECO:0007669"/>
    <property type="project" value="UniProtKB-SubCell"/>
</dbReference>
<dbReference type="GO" id="GO:0005576">
    <property type="term" value="C:extracellular region"/>
    <property type="evidence" value="ECO:0007669"/>
    <property type="project" value="UniProtKB-SubCell"/>
</dbReference>
<dbReference type="GO" id="GO:0016020">
    <property type="term" value="C:membrane"/>
    <property type="evidence" value="ECO:0007669"/>
    <property type="project" value="UniProtKB-KW"/>
</dbReference>
<dbReference type="InterPro" id="IPR007166">
    <property type="entry name" value="Class3_signal_pept_motif"/>
</dbReference>
<dbReference type="Pfam" id="PF04021">
    <property type="entry name" value="Class_IIIsignal"/>
    <property type="match status" value="1"/>
</dbReference>
<feature type="propeptide" id="PRO_0000462056" evidence="5">
    <location>
        <begin position="1"/>
        <end position="5"/>
    </location>
</feature>
<feature type="chain" id="PRO_0000462057" description="Probable minor pilin MMP0709">
    <location>
        <begin position="6"/>
        <end position="198"/>
    </location>
</feature>
<feature type="short sequence motif" description="QXSXEXXXL" evidence="4">
    <location>
        <begin position="6"/>
        <end position="14"/>
    </location>
</feature>
<protein>
    <recommendedName>
        <fullName evidence="4">Probable minor pilin MMP0709</fullName>
    </recommendedName>
</protein>
<organism>
    <name type="scientific">Methanococcus maripaludis (strain DSM 14266 / JCM 13030 / NBRC 101832 / S2 / LL)</name>
    <dbReference type="NCBI Taxonomy" id="267377"/>
    <lineage>
        <taxon>Archaea</taxon>
        <taxon>Methanobacteriati</taxon>
        <taxon>Methanobacteriota</taxon>
        <taxon>Methanomada group</taxon>
        <taxon>Methanococci</taxon>
        <taxon>Methanococcales</taxon>
        <taxon>Methanococcaceae</taxon>
        <taxon>Methanococcus</taxon>
    </lineage>
</organism>
<name>Y709_METMP</name>
<reference key="1">
    <citation type="journal article" date="2004" name="J. Bacteriol.">
        <title>Complete genome sequence of the genetically tractable hydrogenotrophic methanogen Methanococcus maripaludis.</title>
        <authorList>
            <person name="Hendrickson E.L."/>
            <person name="Kaul R."/>
            <person name="Zhou Y."/>
            <person name="Bovee D."/>
            <person name="Chapman P."/>
            <person name="Chung J."/>
            <person name="Conway de Macario E."/>
            <person name="Dodsworth J.A."/>
            <person name="Gillett W."/>
            <person name="Graham D.E."/>
            <person name="Hackett M."/>
            <person name="Haydock A.K."/>
            <person name="Kang A."/>
            <person name="Land M.L."/>
            <person name="Levy R."/>
            <person name="Lie T.J."/>
            <person name="Major T.A."/>
            <person name="Moore B.C."/>
            <person name="Porat I."/>
            <person name="Palmeiri A."/>
            <person name="Rouse G."/>
            <person name="Saenphimmachak C."/>
            <person name="Soell D."/>
            <person name="Van Dien S."/>
            <person name="Wang T."/>
            <person name="Whitman W.B."/>
            <person name="Xia Q."/>
            <person name="Zhang Y."/>
            <person name="Larimer F.W."/>
            <person name="Olson M.V."/>
            <person name="Leigh J.A."/>
        </authorList>
    </citation>
    <scope>NUCLEOTIDE SEQUENCE [LARGE SCALE GENOMIC DNA]</scope>
    <source>
        <strain>DSM 14266 / JCM 13030 / NBRC 101832 / S2 / LL</strain>
    </source>
</reference>
<reference key="2">
    <citation type="journal article" date="2013" name="PLoS ONE">
        <title>Identification of an additional minor pilin essential for piliation in the archaeon Methanococcus maripaludis.</title>
        <authorList>
            <person name="Nair D.B."/>
            <person name="Chung D.K."/>
            <person name="Schneider J."/>
            <person name="Uchida K."/>
            <person name="Aizawa S."/>
            <person name="Jarrell K.F."/>
        </authorList>
    </citation>
    <scope>EXPRESSION</scope>
    <scope>DISRUPTION PHENOTYPE</scope>
    <source>
        <strain>DSM 14266 / JCM 13030 / NBRC 101832 / S2 / LL</strain>
    </source>
</reference>
<proteinExistence type="evidence at transcript level"/>